<gene>
    <name type="primary">atpF</name>
    <name type="ordered locus">Mlut_08140</name>
</gene>
<reference key="1">
    <citation type="journal article" date="2010" name="J. Bacteriol.">
        <title>Genome sequence of the Fleming strain of Micrococcus luteus, a simple free-living actinobacterium.</title>
        <authorList>
            <person name="Young M."/>
            <person name="Artsatbanov V."/>
            <person name="Beller H.R."/>
            <person name="Chandra G."/>
            <person name="Chater K.F."/>
            <person name="Dover L.G."/>
            <person name="Goh E.B."/>
            <person name="Kahan T."/>
            <person name="Kaprelyants A.S."/>
            <person name="Kyrpides N."/>
            <person name="Lapidus A."/>
            <person name="Lowry S.R."/>
            <person name="Lykidis A."/>
            <person name="Mahillon J."/>
            <person name="Markowitz V."/>
            <person name="Mavromatis K."/>
            <person name="Mukamolova G.V."/>
            <person name="Oren A."/>
            <person name="Rokem J.S."/>
            <person name="Smith M.C."/>
            <person name="Young D.I."/>
            <person name="Greenblatt C.L."/>
        </authorList>
    </citation>
    <scope>NUCLEOTIDE SEQUENCE [LARGE SCALE GENOMIC DNA]</scope>
    <source>
        <strain>ATCC 4698 / DSM 20030 / JCM 1464 / CCM 169 / CCUG 5858 / IAM 1056 / NBRC 3333 / NCIMB 9278 / NCTC 2665 / VKM Ac-2230</strain>
    </source>
</reference>
<reference key="2">
    <citation type="journal article" date="1994" name="Biochim. Biophys. Acta">
        <title>ATP synthesis and hydrolysis of the ATP-synthase from Micrococcus luteus regulated by an inhibitor subunit and membrane energization.</title>
        <authorList>
            <person name="Grueber G."/>
            <person name="Godovac-Zimmermann J."/>
            <person name="Nawroth T."/>
        </authorList>
    </citation>
    <scope>PROTEIN SEQUENCE OF 10-34</scope>
</reference>
<protein>
    <recommendedName>
        <fullName>ATP synthase subunit b</fullName>
    </recommendedName>
    <alternativeName>
        <fullName>ATP synthase F(0) sector subunit b</fullName>
    </alternativeName>
    <alternativeName>
        <fullName>ATPase subunit I</fullName>
    </alternativeName>
    <alternativeName>
        <fullName>F-type ATPase subunit b</fullName>
        <shortName>F-ATPase subunit b</shortName>
    </alternativeName>
</protein>
<evidence type="ECO:0000250" key="1"/>
<evidence type="ECO:0000255" key="2"/>
<evidence type="ECO:0000305" key="3"/>
<keyword id="KW-0066">ATP synthesis</keyword>
<keyword id="KW-1003">Cell membrane</keyword>
<keyword id="KW-0138">CF(0)</keyword>
<keyword id="KW-0903">Direct protein sequencing</keyword>
<keyword id="KW-0375">Hydrogen ion transport</keyword>
<keyword id="KW-0406">Ion transport</keyword>
<keyword id="KW-0472">Membrane</keyword>
<keyword id="KW-1185">Reference proteome</keyword>
<keyword id="KW-0812">Transmembrane</keyword>
<keyword id="KW-1133">Transmembrane helix</keyword>
<keyword id="KW-0813">Transport</keyword>
<proteinExistence type="evidence at protein level"/>
<feature type="chain" id="PRO_0000193466" description="ATP synthase subunit b">
    <location>
        <begin position="1"/>
        <end position="184"/>
    </location>
</feature>
<feature type="transmembrane region" description="Helical" evidence="2">
    <location>
        <begin position="24"/>
        <end position="44"/>
    </location>
</feature>
<feature type="sequence conflict" description="In Ref. 2; AA sequence." evidence="3" ref="2">
    <original>L</original>
    <variation>A</variation>
    <location>
        <position position="33"/>
    </location>
</feature>
<organism>
    <name type="scientific">Micrococcus luteus (strain ATCC 4698 / DSM 20030 / JCM 1464 / CCM 169 / CCUG 5858 / IAM 1056 / NBRC 3333 / NCIMB 9278 / NCTC 2665 / VKM Ac-2230)</name>
    <name type="common">Micrococcus lysodeikticus</name>
    <dbReference type="NCBI Taxonomy" id="465515"/>
    <lineage>
        <taxon>Bacteria</taxon>
        <taxon>Bacillati</taxon>
        <taxon>Actinomycetota</taxon>
        <taxon>Actinomycetes</taxon>
        <taxon>Micrococcales</taxon>
        <taxon>Micrococcaceae</taxon>
        <taxon>Micrococcus</taxon>
    </lineage>
</organism>
<accession>P80285</accession>
<accession>C5CA74</accession>
<name>ATPF_MICLC</name>
<comment type="function">
    <text evidence="1">F(1)F(0) ATP synthase produces ATP from ADP in the presence of a proton or sodium gradient. F-type ATPases consist of two structural domains, F(1) containing the extramembraneous catalytic core and F(0) containing the membrane proton channel, linked together by a central stalk and a peripheral stalk. During catalysis, ATP synthesis in the catalytic domain of F(1) is coupled via a rotary mechanism of the central stalk subunits to proton translocation (By similarity).</text>
</comment>
<comment type="function">
    <text evidence="1">Component of the F(0) channel, it forms part of the peripheral stalk, linking F(1) to F(0).</text>
</comment>
<comment type="subunit">
    <text evidence="1">F-type ATPases have 2 components, F(1) - the catalytic core - and F(0) - the membrane proton channel. F(1) has five subunits: alpha(3), beta(3), gamma(1), delta(1), epsilon(1). F(0) has three main subunits: a(1), b(2) and c(10-14). The alpha and beta chains form an alternating ring which encloses part of the gamma chain. F(1) is attached to F(0) by a central stalk formed by the gamma and epsilon chains, while a peripheral stalk is formed by the delta and b chains (By similarity).</text>
</comment>
<comment type="subcellular location">
    <subcellularLocation>
        <location evidence="1">Cell membrane</location>
        <topology evidence="1">Single-pass membrane protein</topology>
    </subcellularLocation>
</comment>
<comment type="similarity">
    <text evidence="3">Belongs to the ATPase B chain family.</text>
</comment>
<dbReference type="EMBL" id="CP001628">
    <property type="protein sequence ID" value="ACS30343.1"/>
    <property type="molecule type" value="Genomic_DNA"/>
</dbReference>
<dbReference type="RefSeq" id="WP_010079019.1">
    <property type="nucleotide sequence ID" value="NC_012803.1"/>
</dbReference>
<dbReference type="SMR" id="P80285"/>
<dbReference type="STRING" id="465515.Mlut_08140"/>
<dbReference type="EnsemblBacteria" id="ACS30343">
    <property type="protein sequence ID" value="ACS30343"/>
    <property type="gene ID" value="Mlut_08140"/>
</dbReference>
<dbReference type="GeneID" id="93344976"/>
<dbReference type="KEGG" id="mlu:Mlut_08140"/>
<dbReference type="PATRIC" id="fig|465515.4.peg.777"/>
<dbReference type="eggNOG" id="COG0711">
    <property type="taxonomic scope" value="Bacteria"/>
</dbReference>
<dbReference type="HOGENOM" id="CLU_079215_5_1_11"/>
<dbReference type="Proteomes" id="UP000000738">
    <property type="component" value="Chromosome"/>
</dbReference>
<dbReference type="GO" id="GO:0005886">
    <property type="term" value="C:plasma membrane"/>
    <property type="evidence" value="ECO:0007669"/>
    <property type="project" value="UniProtKB-SubCell"/>
</dbReference>
<dbReference type="GO" id="GO:0045259">
    <property type="term" value="C:proton-transporting ATP synthase complex"/>
    <property type="evidence" value="ECO:0007669"/>
    <property type="project" value="UniProtKB-KW"/>
</dbReference>
<dbReference type="GO" id="GO:0046933">
    <property type="term" value="F:proton-transporting ATP synthase activity, rotational mechanism"/>
    <property type="evidence" value="ECO:0007669"/>
    <property type="project" value="UniProtKB-UniRule"/>
</dbReference>
<dbReference type="GO" id="GO:0046961">
    <property type="term" value="F:proton-transporting ATPase activity, rotational mechanism"/>
    <property type="evidence" value="ECO:0007669"/>
    <property type="project" value="TreeGrafter"/>
</dbReference>
<dbReference type="CDD" id="cd06503">
    <property type="entry name" value="ATP-synt_Fo_b"/>
    <property type="match status" value="1"/>
</dbReference>
<dbReference type="Gene3D" id="1.20.5.620">
    <property type="entry name" value="F1F0 ATP synthase subunit B, membrane domain"/>
    <property type="match status" value="1"/>
</dbReference>
<dbReference type="HAMAP" id="MF_01398">
    <property type="entry name" value="ATP_synth_b_bprime"/>
    <property type="match status" value="1"/>
</dbReference>
<dbReference type="InterPro" id="IPR028987">
    <property type="entry name" value="ATP_synth_B-like_membr_sf"/>
</dbReference>
<dbReference type="InterPro" id="IPR002146">
    <property type="entry name" value="ATP_synth_b/b'su_bac/chlpt"/>
</dbReference>
<dbReference type="InterPro" id="IPR005864">
    <property type="entry name" value="ATP_synth_F0_bsu_bac"/>
</dbReference>
<dbReference type="InterPro" id="IPR050059">
    <property type="entry name" value="ATP_synthase_B_chain"/>
</dbReference>
<dbReference type="NCBIfam" id="TIGR01144">
    <property type="entry name" value="ATP_synt_b"/>
    <property type="match status" value="1"/>
</dbReference>
<dbReference type="NCBIfam" id="NF004412">
    <property type="entry name" value="PRK05759.1-3"/>
    <property type="match status" value="1"/>
</dbReference>
<dbReference type="PANTHER" id="PTHR33445:SF1">
    <property type="entry name" value="ATP SYNTHASE SUBUNIT B"/>
    <property type="match status" value="1"/>
</dbReference>
<dbReference type="PANTHER" id="PTHR33445">
    <property type="entry name" value="ATP SYNTHASE SUBUNIT B', CHLOROPLASTIC"/>
    <property type="match status" value="1"/>
</dbReference>
<dbReference type="Pfam" id="PF00430">
    <property type="entry name" value="ATP-synt_B"/>
    <property type="match status" value="1"/>
</dbReference>
<dbReference type="SUPFAM" id="SSF81573">
    <property type="entry name" value="F1F0 ATP synthase subunit B, membrane domain"/>
    <property type="match status" value="1"/>
</dbReference>
<sequence length="184" mass="19904">MISNGLILAAAEGANPLIPNPWEILVVVVGFALLMFIVIKFIVPTLEKSYQDRVEAIEGGLAKAEKAQAEANAMMADYESQLADARTEANRIREDARTEAAEIVAEARERATAEATRVFEQAQAQIAAERQQAAAQLKREVGSLATTLAGKIVGESLEDDARSQRVVDRFLADLDRHQSAGVAE</sequence>